<organism evidence="18">
    <name type="scientific">Arabidopsis thaliana</name>
    <name type="common">Mouse-ear cress</name>
    <dbReference type="NCBI Taxonomy" id="3702"/>
    <lineage>
        <taxon>Eukaryota</taxon>
        <taxon>Viridiplantae</taxon>
        <taxon>Streptophyta</taxon>
        <taxon>Embryophyta</taxon>
        <taxon>Tracheophyta</taxon>
        <taxon>Spermatophyta</taxon>
        <taxon>Magnoliopsida</taxon>
        <taxon>eudicotyledons</taxon>
        <taxon>Gunneridae</taxon>
        <taxon>Pentapetalae</taxon>
        <taxon>rosids</taxon>
        <taxon>malvids</taxon>
        <taxon>Brassicales</taxon>
        <taxon>Brassicaceae</taxon>
        <taxon>Camelineae</taxon>
        <taxon>Arabidopsis</taxon>
    </lineage>
</organism>
<name>MORC6_ARATH</name>
<protein>
    <recommendedName>
        <fullName evidence="13">Protein MICRORCHIDIA 6</fullName>
        <shortName evidence="13">AtMORC6</shortName>
        <ecNumber evidence="6">3.6.-.-</ecNumber>
    </recommendedName>
    <alternativeName>
        <fullName evidence="12">Protein CRT1-homolog 6</fullName>
        <shortName evidence="12">CRT1-h6</shortName>
    </alternativeName>
    <alternativeName>
        <fullName evidence="14">Protein DEFECTIVE IN MERISTEM SILENCING 11</fullName>
    </alternativeName>
</protein>
<sequence length="663" mass="74175">MSHDRSVNVSHDAVIAKPERGTMLQSFSPRSHGSKGYSLPQDSEENRGSVGQSAGQSSTSVVDQVRSPADDAGVTSSSTICPAPVCRQFWKAGSYNDELSSKSQQPNGKNYLHVHPMFLHSNATSHKWAFGAVAELLDNAVDEIQNGATFVIVDKTTNPRDGATALLIQDDGGGMDPQAMRHCMGFGFSDKKSDSAIGRYGNGFKTSTMRLGADVIVFSRHSKNQTLTQSIGLLSYTYLTRTGHDRIVVPILDYEFNASAGEFKTLQDREHFISSLSILLEWSPFSTEAELLQQFDDVGPHGTKVIIYNMWLNSDAKLELDFDSVAEDILIEGSIKKTGSKIVNDHIASRFSYSLRVYLSILYLRIPETFKIILRGKVVEHHNVADDLMHPQYILYKPQAAGSEEALVVTTIGFLKEAPKVNLHGFCVYHKNRLIMPFWQVINYSSSRGRGVVGVLEANFVEPTHNKQDFEKTVLLQKLENRLKEMTVEYWSCHCVLIGYQVNKKPRLQIPQKVQPAGRQALSPPPGFQAVFPQGNTTSLPRVSTQPVLLEKRKEHPDSVASAALKRKVGNDDFTVPGHIRVEQFIHGSASQSQDIETVKLMEENKKLRAKCLDRKVRSQNLEVKAMNLRSELENYKSEYERLMVELQALDLVKDEHRRNVNT</sequence>
<reference key="1">
    <citation type="journal article" date="2000" name="Nature">
        <title>Sequence and analysis of chromosome 1 of the plant Arabidopsis thaliana.</title>
        <authorList>
            <person name="Theologis A."/>
            <person name="Ecker J.R."/>
            <person name="Palm C.J."/>
            <person name="Federspiel N.A."/>
            <person name="Kaul S."/>
            <person name="White O."/>
            <person name="Alonso J."/>
            <person name="Altafi H."/>
            <person name="Araujo R."/>
            <person name="Bowman C.L."/>
            <person name="Brooks S.Y."/>
            <person name="Buehler E."/>
            <person name="Chan A."/>
            <person name="Chao Q."/>
            <person name="Chen H."/>
            <person name="Cheuk R.F."/>
            <person name="Chin C.W."/>
            <person name="Chung M.K."/>
            <person name="Conn L."/>
            <person name="Conway A.B."/>
            <person name="Conway A.R."/>
            <person name="Creasy T.H."/>
            <person name="Dewar K."/>
            <person name="Dunn P."/>
            <person name="Etgu P."/>
            <person name="Feldblyum T.V."/>
            <person name="Feng J.-D."/>
            <person name="Fong B."/>
            <person name="Fujii C.Y."/>
            <person name="Gill J.E."/>
            <person name="Goldsmith A.D."/>
            <person name="Haas B."/>
            <person name="Hansen N.F."/>
            <person name="Hughes B."/>
            <person name="Huizar L."/>
            <person name="Hunter J.L."/>
            <person name="Jenkins J."/>
            <person name="Johnson-Hopson C."/>
            <person name="Khan S."/>
            <person name="Khaykin E."/>
            <person name="Kim C.J."/>
            <person name="Koo H.L."/>
            <person name="Kremenetskaia I."/>
            <person name="Kurtz D.B."/>
            <person name="Kwan A."/>
            <person name="Lam B."/>
            <person name="Langin-Hooper S."/>
            <person name="Lee A."/>
            <person name="Lee J.M."/>
            <person name="Lenz C.A."/>
            <person name="Li J.H."/>
            <person name="Li Y.-P."/>
            <person name="Lin X."/>
            <person name="Liu S.X."/>
            <person name="Liu Z.A."/>
            <person name="Luros J.S."/>
            <person name="Maiti R."/>
            <person name="Marziali A."/>
            <person name="Militscher J."/>
            <person name="Miranda M."/>
            <person name="Nguyen M."/>
            <person name="Nierman W.C."/>
            <person name="Osborne B.I."/>
            <person name="Pai G."/>
            <person name="Peterson J."/>
            <person name="Pham P.K."/>
            <person name="Rizzo M."/>
            <person name="Rooney T."/>
            <person name="Rowley D."/>
            <person name="Sakano H."/>
            <person name="Salzberg S.L."/>
            <person name="Schwartz J.R."/>
            <person name="Shinn P."/>
            <person name="Southwick A.M."/>
            <person name="Sun H."/>
            <person name="Tallon L.J."/>
            <person name="Tambunga G."/>
            <person name="Toriumi M.J."/>
            <person name="Town C.D."/>
            <person name="Utterback T."/>
            <person name="Van Aken S."/>
            <person name="Vaysberg M."/>
            <person name="Vysotskaia V.S."/>
            <person name="Walker M."/>
            <person name="Wu D."/>
            <person name="Yu G."/>
            <person name="Fraser C.M."/>
            <person name="Venter J.C."/>
            <person name="Davis R.W."/>
        </authorList>
    </citation>
    <scope>NUCLEOTIDE SEQUENCE [LARGE SCALE GENOMIC DNA]</scope>
    <source>
        <strain>cv. Columbia</strain>
    </source>
</reference>
<reference key="2">
    <citation type="journal article" date="2017" name="Plant J.">
        <title>Araport11: a complete reannotation of the Arabidopsis thaliana reference genome.</title>
        <authorList>
            <person name="Cheng C.Y."/>
            <person name="Krishnakumar V."/>
            <person name="Chan A.P."/>
            <person name="Thibaud-Nissen F."/>
            <person name="Schobel S."/>
            <person name="Town C.D."/>
        </authorList>
    </citation>
    <scope>GENOME REANNOTATION</scope>
    <source>
        <strain>cv. Columbia</strain>
    </source>
</reference>
<reference key="3">
    <citation type="submission" date="2005-03" db="EMBL/GenBank/DDBJ databases">
        <title>Large-scale analysis of RIKEN Arabidopsis full-length (RAFL) cDNAs.</title>
        <authorList>
            <person name="Totoki Y."/>
            <person name="Seki M."/>
            <person name="Ishida J."/>
            <person name="Nakajima M."/>
            <person name="Enju A."/>
            <person name="Kamiya A."/>
            <person name="Narusaka M."/>
            <person name="Shin-i T."/>
            <person name="Nakagawa M."/>
            <person name="Sakamoto N."/>
            <person name="Oishi K."/>
            <person name="Kohara Y."/>
            <person name="Kobayashi M."/>
            <person name="Toyoda A."/>
            <person name="Sakaki Y."/>
            <person name="Sakurai T."/>
            <person name="Iida K."/>
            <person name="Akiyama K."/>
            <person name="Satou M."/>
            <person name="Toyoda T."/>
            <person name="Konagaya A."/>
            <person name="Carninci P."/>
            <person name="Kawai J."/>
            <person name="Hayashizaki Y."/>
            <person name="Shinozaki K."/>
        </authorList>
    </citation>
    <scope>NUCLEOTIDE SEQUENCE [LARGE SCALE MRNA]</scope>
    <source>
        <strain>cv. Columbia</strain>
    </source>
</reference>
<reference key="4">
    <citation type="journal article" date="2008" name="Plant Signal. Behav.">
        <title>The involvement of the Arabidopsis CRT1 ATPase family in disease resistance protein-mediated signaling.</title>
        <authorList>
            <person name="Kang H.-G."/>
            <person name="Klessig D.F."/>
        </authorList>
    </citation>
    <scope>GENE FAMILY</scope>
    <scope>NOMENCLATURE</scope>
</reference>
<reference key="5">
    <citation type="journal article" date="2012" name="Curr. Biol.">
        <title>Involvement of a GHKL ATPase in RNA-directed DNA methylation in Arabidopsis thaliana.</title>
        <authorList>
            <person name="Lorkovic Z.J."/>
            <person name="Naumann U."/>
            <person name="Matzke A.J."/>
            <person name="Matzke M."/>
        </authorList>
    </citation>
    <scope>FUNCTION</scope>
    <scope>DISRUPTION PHENOTYPE</scope>
    <scope>INTERACTION WITH DMS3</scope>
    <scope>ACTIVITY REGULATION</scope>
    <source>
        <strain>cv. Columbia</strain>
    </source>
</reference>
<reference key="6">
    <citation type="journal article" date="2012" name="Science">
        <title>MORC family ATPases required for heterochromatin condensation and gene silencing.</title>
        <authorList>
            <person name="Moissiard G."/>
            <person name="Cokus S.J."/>
            <person name="Cary J."/>
            <person name="Feng S."/>
            <person name="Billi A.C."/>
            <person name="Stroud H."/>
            <person name="Husmann D."/>
            <person name="Zhan Y."/>
            <person name="Lajoie B.R."/>
            <person name="McCord R.P."/>
            <person name="Hale C.J."/>
            <person name="Feng W."/>
            <person name="Michaels S.D."/>
            <person name="Frand A.R."/>
            <person name="Pellegrini M."/>
            <person name="Dekker J."/>
            <person name="Kim J.K."/>
            <person name="Jacobsen S.E."/>
        </authorList>
    </citation>
    <scope>FUNCTION</scope>
    <scope>DISRUPTION PHENOTYPE</scope>
    <scope>SUBCELLULAR LOCATION</scope>
    <source>
        <strain>cv. Columbia</strain>
    </source>
</reference>
<reference key="7">
    <citation type="journal article" date="2013" name="Plant J.">
        <title>The stochastic silencing phenotype of Arabidopsis morc6 mutants reveals a role in efficient RNA-directed DNA methylation.</title>
        <authorList>
            <person name="Brabbs T.R."/>
            <person name="He Z."/>
            <person name="Hogg K."/>
            <person name="Kamenski A."/>
            <person name="Li Y."/>
            <person name="Paszkiewicz K.H."/>
            <person name="Moore K.A."/>
            <person name="O'Toole P."/>
            <person name="Graham I.A."/>
            <person name="Jones L."/>
        </authorList>
    </citation>
    <scope>FUNCTION</scope>
    <scope>DISRUPTION PHENOTYPE</scope>
    <source>
        <strain>cv. C24</strain>
        <strain>cv. Columbia</strain>
    </source>
</reference>
<reference key="8">
    <citation type="journal article" date="2014" name="PLoS Genet.">
        <title>The SET domain proteins SUVH2 and SUVH9 are required for Pol V occupancy at RNA-directed DNA methylation loci.</title>
        <authorList>
            <person name="Liu Z.-W."/>
            <person name="Shao C.-R."/>
            <person name="Zhang C.-J."/>
            <person name="Zhou J.-X."/>
            <person name="Zhang S.-W."/>
            <person name="Li L."/>
            <person name="Chen S."/>
            <person name="Huang H.-W."/>
            <person name="Cai T."/>
            <person name="He X.-J."/>
        </authorList>
    </citation>
    <scope>SUBUNIT</scope>
    <scope>INTERACTION WITH SUVH9; MORC1/CRT1 AND MORC2</scope>
    <scope>HOMODIMERIZATION</scope>
</reference>
<reference key="9">
    <citation type="journal article" date="2014" name="Proc. Natl. Acad. Sci. U.S.A.">
        <title>Transcriptional gene silencing by Arabidopsis microrchidia homologues involves the formation of heteromers.</title>
        <authorList>
            <person name="Moissiard G."/>
            <person name="Bischof S."/>
            <person name="Husmann D."/>
            <person name="Pastor W.A."/>
            <person name="Hale C.J."/>
            <person name="Yen L."/>
            <person name="Stroud H."/>
            <person name="Papikian A."/>
            <person name="Vashisht A.A."/>
            <person name="Wohlschlegel J.A."/>
            <person name="Jacobsen S.E."/>
        </authorList>
    </citation>
    <scope>FUNCTION</scope>
    <scope>DISRUPTION PHENOTYPE</scope>
    <scope>INTERACTION WITH MORC1/CRT1 AND MORC2</scope>
    <scope>GENE FAMILY</scope>
    <scope>NOMENCLATURE</scope>
</reference>
<reference key="10">
    <citation type="journal article" date="2016" name="PLoS Genet.">
        <title>Arabidopsis AtMORC4 and AtMORC7 form nuclear bodies and repress a large number of protein-coding genes.</title>
        <authorList>
            <person name="Harris C.J."/>
            <person name="Husmann D."/>
            <person name="Liu W."/>
            <person name="Kasmi F.E."/>
            <person name="Wang H."/>
            <person name="Papikian A."/>
            <person name="Pastor W.A."/>
            <person name="Moissiard G."/>
            <person name="Vashisht A.A."/>
            <person name="Dangl J.L."/>
            <person name="Wohlschlegel J.A."/>
            <person name="Jacobsen S.E."/>
        </authorList>
    </citation>
    <scope>FUNCTION</scope>
    <source>
        <strain>cv. Columbia</strain>
    </source>
</reference>
<reference key="11">
    <citation type="journal article" date="2016" name="PLoS Genet.">
        <title>Two components of the RNA-Directed DNA methylation pathway associate with MORC6 and silence loci targeted by MORC6 in Arabidopsis.</title>
        <authorList>
            <person name="Liu Z.-W."/>
            <person name="Zhou J.-X."/>
            <person name="Huang H.-W."/>
            <person name="Li Y.-Q."/>
            <person name="Shao C.-R."/>
            <person name="Li L."/>
            <person name="Cai T."/>
            <person name="Chen S."/>
            <person name="He X.-J."/>
        </authorList>
    </citation>
    <scope>FUNCTION</scope>
    <scope>DISRUPTION PHENOTYPE</scope>
    <scope>INTERACTION WITH IDN2; SWI3B; SWI3C AND SWI3D</scope>
</reference>
<proteinExistence type="evidence at protein level"/>
<keyword id="KW-0067">ATP-binding</keyword>
<keyword id="KW-0156">Chromatin regulator</keyword>
<keyword id="KW-0175">Coiled coil</keyword>
<keyword id="KW-0227">DNA damage</keyword>
<keyword id="KW-0234">DNA repair</keyword>
<keyword id="KW-0238">DNA-binding</keyword>
<keyword id="KW-0255">Endonuclease</keyword>
<keyword id="KW-0378">Hydrolase</keyword>
<keyword id="KW-0540">Nuclease</keyword>
<keyword id="KW-0547">Nucleotide-binding</keyword>
<keyword id="KW-0539">Nucleus</keyword>
<keyword id="KW-0611">Plant defense</keyword>
<keyword id="KW-1185">Reference proteome</keyword>
<keyword id="KW-0694">RNA-binding</keyword>
<keyword id="KW-0943">RNA-mediated gene silencing</keyword>
<dbReference type="EC" id="3.6.-.-" evidence="6"/>
<dbReference type="EMBL" id="AC068602">
    <property type="protein sequence ID" value="AAF79293.1"/>
    <property type="status" value="ALT_SEQ"/>
    <property type="molecule type" value="Genomic_DNA"/>
</dbReference>
<dbReference type="EMBL" id="CP002684">
    <property type="protein sequence ID" value="AEE29802.1"/>
    <property type="molecule type" value="Genomic_DNA"/>
</dbReference>
<dbReference type="EMBL" id="AK221449">
    <property type="protein sequence ID" value="BAD94510.1"/>
    <property type="molecule type" value="mRNA"/>
</dbReference>
<dbReference type="PIR" id="D86324">
    <property type="entry name" value="D86324"/>
</dbReference>
<dbReference type="RefSeq" id="NP_173344.2">
    <property type="nucleotide sequence ID" value="NM_101768.4"/>
</dbReference>
<dbReference type="SMR" id="Q56Y74"/>
<dbReference type="FunCoup" id="Q56Y74">
    <property type="interactions" value="2676"/>
</dbReference>
<dbReference type="STRING" id="3702.Q56Y74"/>
<dbReference type="iPTMnet" id="Q56Y74"/>
<dbReference type="PaxDb" id="3702-AT1G19100.1"/>
<dbReference type="ProteomicsDB" id="238301"/>
<dbReference type="EnsemblPlants" id="AT1G19100.1">
    <property type="protein sequence ID" value="AT1G19100.1"/>
    <property type="gene ID" value="AT1G19100"/>
</dbReference>
<dbReference type="GeneID" id="838492"/>
<dbReference type="Gramene" id="AT1G19100.1">
    <property type="protein sequence ID" value="AT1G19100.1"/>
    <property type="gene ID" value="AT1G19100"/>
</dbReference>
<dbReference type="KEGG" id="ath:AT1G19100"/>
<dbReference type="Araport" id="AT1G19100"/>
<dbReference type="TAIR" id="AT1G19100">
    <property type="gene designation" value="DMS11"/>
</dbReference>
<dbReference type="eggNOG" id="KOG1845">
    <property type="taxonomic scope" value="Eukaryota"/>
</dbReference>
<dbReference type="HOGENOM" id="CLU_011516_4_1_1"/>
<dbReference type="InParanoid" id="Q56Y74"/>
<dbReference type="OMA" id="HKVRSQN"/>
<dbReference type="OrthoDB" id="757982at2759"/>
<dbReference type="PhylomeDB" id="Q56Y74"/>
<dbReference type="PRO" id="PR:Q56Y74"/>
<dbReference type="Proteomes" id="UP000006548">
    <property type="component" value="Chromosome 1"/>
</dbReference>
<dbReference type="ExpressionAtlas" id="Q56Y74">
    <property type="expression patterns" value="baseline and differential"/>
</dbReference>
<dbReference type="GO" id="GO:0009941">
    <property type="term" value="C:chloroplast envelope"/>
    <property type="evidence" value="ECO:0007005"/>
    <property type="project" value="TAIR"/>
</dbReference>
<dbReference type="GO" id="GO:0005634">
    <property type="term" value="C:nucleus"/>
    <property type="evidence" value="ECO:0000314"/>
    <property type="project" value="UniProtKB"/>
</dbReference>
<dbReference type="GO" id="GO:0009506">
    <property type="term" value="C:plasmodesma"/>
    <property type="evidence" value="ECO:0007005"/>
    <property type="project" value="TAIR"/>
</dbReference>
<dbReference type="GO" id="GO:0005524">
    <property type="term" value="F:ATP binding"/>
    <property type="evidence" value="ECO:0007669"/>
    <property type="project" value="UniProtKB-KW"/>
</dbReference>
<dbReference type="GO" id="GO:0016887">
    <property type="term" value="F:ATP hydrolysis activity"/>
    <property type="evidence" value="ECO:0000314"/>
    <property type="project" value="TAIR"/>
</dbReference>
<dbReference type="GO" id="GO:0003677">
    <property type="term" value="F:DNA binding"/>
    <property type="evidence" value="ECO:0000250"/>
    <property type="project" value="UniProtKB"/>
</dbReference>
<dbReference type="GO" id="GO:0004519">
    <property type="term" value="F:endonuclease activity"/>
    <property type="evidence" value="ECO:0000250"/>
    <property type="project" value="UniProtKB"/>
</dbReference>
<dbReference type="GO" id="GO:0042803">
    <property type="term" value="F:protein homodimerization activity"/>
    <property type="evidence" value="ECO:0000314"/>
    <property type="project" value="UniProtKB"/>
</dbReference>
<dbReference type="GO" id="GO:0003723">
    <property type="term" value="F:RNA binding"/>
    <property type="evidence" value="ECO:0000250"/>
    <property type="project" value="UniProtKB"/>
</dbReference>
<dbReference type="GO" id="GO:0006952">
    <property type="term" value="P:defense response"/>
    <property type="evidence" value="ECO:0007669"/>
    <property type="project" value="UniProtKB-KW"/>
</dbReference>
<dbReference type="GO" id="GO:0006281">
    <property type="term" value="P:DNA repair"/>
    <property type="evidence" value="ECO:0007669"/>
    <property type="project" value="UniProtKB-KW"/>
</dbReference>
<dbReference type="GO" id="GO:0080188">
    <property type="term" value="P:gene silencing by siRNA-directed DNA methylation"/>
    <property type="evidence" value="ECO:0000315"/>
    <property type="project" value="UniProtKB"/>
</dbReference>
<dbReference type="GO" id="GO:1902290">
    <property type="term" value="P:positive regulation of defense response to oomycetes"/>
    <property type="evidence" value="ECO:0000315"/>
    <property type="project" value="UniProtKB"/>
</dbReference>
<dbReference type="GO" id="GO:0006282">
    <property type="term" value="P:regulation of DNA repair"/>
    <property type="evidence" value="ECO:0000250"/>
    <property type="project" value="UniProtKB"/>
</dbReference>
<dbReference type="GO" id="GO:0060966">
    <property type="term" value="P:regulation of gene silencing by regulatory ncRNA"/>
    <property type="evidence" value="ECO:0000315"/>
    <property type="project" value="UniProtKB"/>
</dbReference>
<dbReference type="CDD" id="cd16931">
    <property type="entry name" value="HATPase_MORC-like"/>
    <property type="match status" value="1"/>
</dbReference>
<dbReference type="FunFam" id="3.30.565.10:FF:000075">
    <property type="entry name" value="MORC family CW-type zinc finger protein 4"/>
    <property type="match status" value="1"/>
</dbReference>
<dbReference type="Gene3D" id="3.30.565.10">
    <property type="entry name" value="Histidine kinase-like ATPase, C-terminal domain"/>
    <property type="match status" value="1"/>
</dbReference>
<dbReference type="InterPro" id="IPR036890">
    <property type="entry name" value="HATPase_C_sf"/>
</dbReference>
<dbReference type="InterPro" id="IPR045261">
    <property type="entry name" value="MORC_ATPase"/>
</dbReference>
<dbReference type="InterPro" id="IPR041006">
    <property type="entry name" value="Morc_S5"/>
</dbReference>
<dbReference type="PANTHER" id="PTHR23336:SF44">
    <property type="entry name" value="PROTEIN MICRORCHIDIA 6"/>
    <property type="match status" value="1"/>
</dbReference>
<dbReference type="PANTHER" id="PTHR23336">
    <property type="entry name" value="ZINC FINGER CW-TYPE COILED-COIL DOMAIN PROTEIN 3"/>
    <property type="match status" value="1"/>
</dbReference>
<dbReference type="Pfam" id="PF13589">
    <property type="entry name" value="HATPase_c_3"/>
    <property type="match status" value="1"/>
</dbReference>
<dbReference type="Pfam" id="PF17942">
    <property type="entry name" value="Morc6_S5"/>
    <property type="match status" value="1"/>
</dbReference>
<dbReference type="SUPFAM" id="SSF55874">
    <property type="entry name" value="ATPase domain of HSP90 chaperone/DNA topoisomerase II/histidine kinase"/>
    <property type="match status" value="1"/>
</dbReference>
<accession>Q56Y74</accession>
<accession>Q9LMB8</accession>
<gene>
    <name evidence="13" type="primary">MORC6</name>
    <name evidence="12" type="synonym">CRH6</name>
    <name evidence="14" type="synonym">DMS11</name>
    <name evidence="17" type="ordered locus">At1g19100</name>
    <name evidence="16" type="ORF">F14D16.25</name>
</gene>
<feature type="chain" id="PRO_0000434981" description="Protein MICRORCHIDIA 6">
    <location>
        <begin position="1"/>
        <end position="663"/>
    </location>
</feature>
<feature type="region of interest" description="Disordered" evidence="4">
    <location>
        <begin position="1"/>
        <end position="77"/>
    </location>
</feature>
<feature type="coiled-coil region" evidence="2">
    <location>
        <begin position="614"/>
        <end position="659"/>
    </location>
</feature>
<feature type="short sequence motif" description="Nuclear localization signal" evidence="3">
    <location>
        <begin position="552"/>
        <end position="559"/>
    </location>
</feature>
<feature type="compositionally biased region" description="Polar residues" evidence="4">
    <location>
        <begin position="49"/>
        <end position="62"/>
    </location>
</feature>
<evidence type="ECO:0000250" key="1">
    <source>
        <dbReference type="UniProtKB" id="Q84WV6"/>
    </source>
</evidence>
<evidence type="ECO:0000255" key="2"/>
<evidence type="ECO:0000255" key="3">
    <source>
        <dbReference type="PROSITE-ProRule" id="PRU00768"/>
    </source>
</evidence>
<evidence type="ECO:0000256" key="4">
    <source>
        <dbReference type="SAM" id="MobiDB-lite"/>
    </source>
</evidence>
<evidence type="ECO:0000269" key="5">
    <source>
    </source>
</evidence>
<evidence type="ECO:0000269" key="6">
    <source>
    </source>
</evidence>
<evidence type="ECO:0000269" key="7">
    <source>
    </source>
</evidence>
<evidence type="ECO:0000269" key="8">
    <source>
    </source>
</evidence>
<evidence type="ECO:0000269" key="9">
    <source>
    </source>
</evidence>
<evidence type="ECO:0000269" key="10">
    <source>
    </source>
</evidence>
<evidence type="ECO:0000269" key="11">
    <source>
    </source>
</evidence>
<evidence type="ECO:0000303" key="12">
    <source>
    </source>
</evidence>
<evidence type="ECO:0000303" key="13">
    <source>
    </source>
</evidence>
<evidence type="ECO:0000303" key="14">
    <source>
    </source>
</evidence>
<evidence type="ECO:0000305" key="15"/>
<evidence type="ECO:0000312" key="16">
    <source>
        <dbReference type="EMBL" id="AAF79293.1"/>
    </source>
</evidence>
<evidence type="ECO:0000312" key="17">
    <source>
        <dbReference type="EMBL" id="AEE29802.1"/>
    </source>
</evidence>
<evidence type="ECO:0000312" key="18">
    <source>
        <dbReference type="EMBL" id="BAD94510.1"/>
    </source>
</evidence>
<comment type="function">
    <text evidence="1 5 6 7 10 11">Involved in RNA-directed DNA methylation (RdDM) as a component of the RdDM machinery and required for gene silencing (PubMed:22560611, PubMed:23675613, PubMed:27171427). Together with SUVH2 and SUVH9, regulates the silencing of some transposable elements (TEs) (PubMed:27171427). Exhibits ATPase activity (PubMed:22560611). May also be involved in the regulation of chromatin architecture/condensation to maintain gene silencing (PubMed:22555433, PubMed:27171427). Binds DNA/RNA in a non-specific manner and exhibits endonuclease activity. Probably involved in DNA repair (By similarity). Positive regulator of defense against the oomycete Hyaloperonospora arabidopsidis (Hpa) (PubMed:27171361).</text>
</comment>
<comment type="cofactor">
    <cofactor evidence="1">
        <name>Mg(2+)</name>
        <dbReference type="ChEBI" id="CHEBI:18420"/>
    </cofactor>
    <cofactor evidence="1">
        <name>Mn(2+)</name>
        <dbReference type="ChEBI" id="CHEBI:29035"/>
    </cofactor>
</comment>
<comment type="activity regulation">
    <text evidence="6">Stimulated by DMS3.</text>
</comment>
<comment type="subunit">
    <text evidence="6 8 9 11">Homodimer and heterodimers with MORC1/CRT1 and MORC2 (PubMed:24465213, PubMed:24799676). Interacts directly with SUVH9 (PubMed:24465213). Component of an RNA-directed DNA methylation (RdDM) complex that contains at least MORC6, MORC1/CRT1, MORC2, SWI3D and SUVH9 (PubMed:24465213). Stimulated by interaction with DMS3 (PubMed:22560611). Interacts with IDN2, SWI3B, SWI3C and SWI3D (PubMed:27171427).</text>
</comment>
<comment type="subcellular location">
    <subcellularLocation>
        <location evidence="3 5">Nucleus</location>
    </subcellularLocation>
    <text evidence="5">Present in nuclear bodies near chromocenters.</text>
</comment>
<comment type="disruption phenotype">
    <text evidence="5 6 7 9 11">Accumulation of siRNAs and slight reductions of repressive epigenetic modifications (e.g. decreases in DNA methylation and H3K9me2 and increase in H3ac) at target sequences, especially in the shoot apical meristem after rosette leaves development, leading to derepression of silenced-genes (PubMed:22560611, PubMed:23675613). Stochastic silencing phenotype due to randomized RNA-directed DNA methylation (RdDM) (PubMed:23675613). Impaired gene silencing due to decondensation of chromocenters leading to the derepression of DNA-methylated genes and transposable elements (TEs); DNA and histone methylation seems normal (PubMed:22555433, PubMed:24799676, PubMed:27171427).</text>
</comment>
<comment type="similarity">
    <text evidence="15">Belongs to the MORC ATPase protein family.</text>
</comment>
<comment type="sequence caution" evidence="15">
    <conflict type="erroneous gene model prediction">
        <sequence resource="EMBL-CDS" id="AAF79293"/>
    </conflict>
</comment>